<dbReference type="EC" id="6.1.1.5" evidence="1"/>
<dbReference type="EMBL" id="AM884177">
    <property type="protein sequence ID" value="CAP06667.1"/>
    <property type="molecule type" value="Genomic_DNA"/>
</dbReference>
<dbReference type="RefSeq" id="WP_012263584.1">
    <property type="nucleotide sequence ID" value="NC_010280.2"/>
</dbReference>
<dbReference type="SMR" id="B0BB05"/>
<dbReference type="KEGG" id="ctl:CTLon_0269"/>
<dbReference type="HOGENOM" id="CLU_001493_1_1_0"/>
<dbReference type="Proteomes" id="UP001154401">
    <property type="component" value="Chromosome"/>
</dbReference>
<dbReference type="GO" id="GO:0005737">
    <property type="term" value="C:cytoplasm"/>
    <property type="evidence" value="ECO:0007669"/>
    <property type="project" value="UniProtKB-SubCell"/>
</dbReference>
<dbReference type="GO" id="GO:0002161">
    <property type="term" value="F:aminoacyl-tRNA deacylase activity"/>
    <property type="evidence" value="ECO:0007669"/>
    <property type="project" value="InterPro"/>
</dbReference>
<dbReference type="GO" id="GO:0005524">
    <property type="term" value="F:ATP binding"/>
    <property type="evidence" value="ECO:0007669"/>
    <property type="project" value="UniProtKB-UniRule"/>
</dbReference>
<dbReference type="GO" id="GO:0004822">
    <property type="term" value="F:isoleucine-tRNA ligase activity"/>
    <property type="evidence" value="ECO:0007669"/>
    <property type="project" value="UniProtKB-UniRule"/>
</dbReference>
<dbReference type="GO" id="GO:0000049">
    <property type="term" value="F:tRNA binding"/>
    <property type="evidence" value="ECO:0007669"/>
    <property type="project" value="InterPro"/>
</dbReference>
<dbReference type="GO" id="GO:0008270">
    <property type="term" value="F:zinc ion binding"/>
    <property type="evidence" value="ECO:0007669"/>
    <property type="project" value="UniProtKB-UniRule"/>
</dbReference>
<dbReference type="GO" id="GO:0006428">
    <property type="term" value="P:isoleucyl-tRNA aminoacylation"/>
    <property type="evidence" value="ECO:0007669"/>
    <property type="project" value="UniProtKB-UniRule"/>
</dbReference>
<dbReference type="CDD" id="cd07961">
    <property type="entry name" value="Anticodon_Ia_Ile_ABEc"/>
    <property type="match status" value="1"/>
</dbReference>
<dbReference type="CDD" id="cd00818">
    <property type="entry name" value="IleRS_core"/>
    <property type="match status" value="1"/>
</dbReference>
<dbReference type="FunFam" id="3.40.50.620:FF:000241">
    <property type="entry name" value="Isoleucine--tRNA ligase"/>
    <property type="match status" value="1"/>
</dbReference>
<dbReference type="FunFam" id="3.40.50.620:FF:000133">
    <property type="entry name" value="Isoleucyl-tRNA synthetase, cytoplasmic"/>
    <property type="match status" value="1"/>
</dbReference>
<dbReference type="Gene3D" id="3.40.50.620">
    <property type="entry name" value="HUPs"/>
    <property type="match status" value="2"/>
</dbReference>
<dbReference type="Gene3D" id="1.10.730.10">
    <property type="entry name" value="Isoleucyl-tRNA Synthetase, Domain 1"/>
    <property type="match status" value="1"/>
</dbReference>
<dbReference type="HAMAP" id="MF_02003">
    <property type="entry name" value="Ile_tRNA_synth_type2"/>
    <property type="match status" value="1"/>
</dbReference>
<dbReference type="InterPro" id="IPR001412">
    <property type="entry name" value="aa-tRNA-synth_I_CS"/>
</dbReference>
<dbReference type="InterPro" id="IPR002300">
    <property type="entry name" value="aa-tRNA-synth_Ia"/>
</dbReference>
<dbReference type="InterPro" id="IPR033709">
    <property type="entry name" value="Anticodon_Ile_ABEc"/>
</dbReference>
<dbReference type="InterPro" id="IPR002301">
    <property type="entry name" value="Ile-tRNA-ligase"/>
</dbReference>
<dbReference type="InterPro" id="IPR023586">
    <property type="entry name" value="Ile-tRNA-ligase_type2"/>
</dbReference>
<dbReference type="InterPro" id="IPR013155">
    <property type="entry name" value="M/V/L/I-tRNA-synth_anticd-bd"/>
</dbReference>
<dbReference type="InterPro" id="IPR014729">
    <property type="entry name" value="Rossmann-like_a/b/a_fold"/>
</dbReference>
<dbReference type="InterPro" id="IPR009080">
    <property type="entry name" value="tRNAsynth_Ia_anticodon-bd"/>
</dbReference>
<dbReference type="InterPro" id="IPR009008">
    <property type="entry name" value="Val/Leu/Ile-tRNA-synth_edit"/>
</dbReference>
<dbReference type="NCBIfam" id="TIGR00392">
    <property type="entry name" value="ileS"/>
    <property type="match status" value="1"/>
</dbReference>
<dbReference type="PANTHER" id="PTHR42780:SF1">
    <property type="entry name" value="ISOLEUCINE--TRNA LIGASE, CYTOPLASMIC"/>
    <property type="match status" value="1"/>
</dbReference>
<dbReference type="PANTHER" id="PTHR42780">
    <property type="entry name" value="SOLEUCYL-TRNA SYNTHETASE"/>
    <property type="match status" value="1"/>
</dbReference>
<dbReference type="Pfam" id="PF08264">
    <property type="entry name" value="Anticodon_1"/>
    <property type="match status" value="1"/>
</dbReference>
<dbReference type="Pfam" id="PF19302">
    <property type="entry name" value="DUF5915"/>
    <property type="match status" value="1"/>
</dbReference>
<dbReference type="Pfam" id="PF00133">
    <property type="entry name" value="tRNA-synt_1"/>
    <property type="match status" value="1"/>
</dbReference>
<dbReference type="PRINTS" id="PR00984">
    <property type="entry name" value="TRNASYNTHILE"/>
</dbReference>
<dbReference type="SUPFAM" id="SSF47323">
    <property type="entry name" value="Anticodon-binding domain of a subclass of class I aminoacyl-tRNA synthetases"/>
    <property type="match status" value="2"/>
</dbReference>
<dbReference type="SUPFAM" id="SSF52374">
    <property type="entry name" value="Nucleotidylyl transferase"/>
    <property type="match status" value="1"/>
</dbReference>
<dbReference type="SUPFAM" id="SSF50677">
    <property type="entry name" value="ValRS/IleRS/LeuRS editing domain"/>
    <property type="match status" value="1"/>
</dbReference>
<dbReference type="PROSITE" id="PS00178">
    <property type="entry name" value="AA_TRNA_LIGASE_I"/>
    <property type="match status" value="1"/>
</dbReference>
<name>SYI_CHLTB</name>
<comment type="function">
    <text evidence="1">Catalyzes the attachment of isoleucine to tRNA(Ile). As IleRS can inadvertently accommodate and process structurally similar amino acids such as valine, to avoid such errors it has two additional distinct tRNA(Ile)-dependent editing activities. One activity is designated as 'pretransfer' editing and involves the hydrolysis of activated Val-AMP. The other activity is designated 'posttransfer' editing and involves deacylation of mischarged Val-tRNA(Ile).</text>
</comment>
<comment type="catalytic activity">
    <reaction evidence="1">
        <text>tRNA(Ile) + L-isoleucine + ATP = L-isoleucyl-tRNA(Ile) + AMP + diphosphate</text>
        <dbReference type="Rhea" id="RHEA:11060"/>
        <dbReference type="Rhea" id="RHEA-COMP:9666"/>
        <dbReference type="Rhea" id="RHEA-COMP:9695"/>
        <dbReference type="ChEBI" id="CHEBI:30616"/>
        <dbReference type="ChEBI" id="CHEBI:33019"/>
        <dbReference type="ChEBI" id="CHEBI:58045"/>
        <dbReference type="ChEBI" id="CHEBI:78442"/>
        <dbReference type="ChEBI" id="CHEBI:78528"/>
        <dbReference type="ChEBI" id="CHEBI:456215"/>
        <dbReference type="EC" id="6.1.1.5"/>
    </reaction>
</comment>
<comment type="cofactor">
    <cofactor evidence="1">
        <name>Zn(2+)</name>
        <dbReference type="ChEBI" id="CHEBI:29105"/>
    </cofactor>
</comment>
<comment type="subunit">
    <text evidence="1">Monomer.</text>
</comment>
<comment type="subcellular location">
    <subcellularLocation>
        <location evidence="1">Cytoplasm</location>
    </subcellularLocation>
</comment>
<comment type="domain">
    <text evidence="1">IleRS has two distinct active sites: one for aminoacylation and one for editing. The misactivated valine is translocated from the active site to the editing site, which sterically excludes the correctly activated isoleucine. The single editing site contains two valyl binding pockets, one specific for each substrate (Val-AMP or Val-tRNA(Ile)).</text>
</comment>
<comment type="similarity">
    <text evidence="1">Belongs to the class-I aminoacyl-tRNA synthetase family. IleS type 2 subfamily.</text>
</comment>
<sequence>MDNEDKISISAKEEKILSFWKEQDIFQKTLDNREGCPTFSFYDGPPFATGLPHYGHLLAGTIKDVVCRYASMDGHYVPRRFGWDCHGVPVEYEVEKSLGLTEPGAIERFGVANFNEECRKIVFRYADEWKYFVDRIGRWVDFSATWRTMDLSFMESVWWVFRSLYDQGLVYEGTKVVPFSTKLGTPLSNFEAGQNYKEVDDPSVVVKFALQDNQGFLLAWTTTPWTLVSNMALAVHPELTYVRIKDKESGDEYILGQESLPRWFPDRESYEWIGQLSGKSLVGQSYEPLFPYFQDKKELGAFRILPADFIEESEGTGIVHMAPAFGEADFFACQEHNVPLVCPVDNQGCYTAEVKDFVGEYIKSADKGIARRLKNENKLFYQGTVRHRYPFCWRTDSPLIYKAVNSWFVAVEKVKSKMLKANESIHWTPGHIKQGRFGKWLEGARDWAISRNRYWGTPIPIWRSDDGELLVIGSIQELEALSGQKIVDLHRHFIDEIEINQNGKSFRRIPYVFDCWFDSGAMPYAQNHYPFERAEETEACFPADFIAEGLDQTRGWFYTLTVIAAALFDQPAFKNVIVNGIILAEDGNKMSKRLNNYPSPKMIMDAYGADALRLYLLNSVVVKAEDLRFSDKGVESVLKQVLLPLSNALAFYKTYAELYGFDPKETDNIELAEIDRWILSSLYSLLGKTRESMSQYDLHAAVNPFVDFIEDLTNWYIRRSRRRFWDAEDSADRRAAFSTLYEVLVVFSKVIAPFIPFISEDMYQQLRGETDPESVHLCDFPHVVLEKILPNLERKMQDIREIVALGHSLRKEHKLKVRQPLQNVYIVGSQERMEALAQVGSLIGEELNVKDVHFCSETPEYVTTLIKPNFRTLGKKVGNRLPEIQRALAGLPQEQIQAFMHKGQMVVSLGEETISLDKEDITVSWASAEGFVARSSASFVAVLDCQLTEPLIMEGIARELVNKINTMRRNGKLHVSDRIAIRLHAPVIVQEAFALHKEYICEETLTTSVSVIDYKEGEEWDINGHAVSFVLERVER</sequence>
<reference key="1">
    <citation type="journal article" date="2008" name="Genome Res.">
        <title>Chlamydia trachomatis: genome sequence analysis of lymphogranuloma venereum isolates.</title>
        <authorList>
            <person name="Thomson N.R."/>
            <person name="Holden M.T.G."/>
            <person name="Carder C."/>
            <person name="Lennard N."/>
            <person name="Lockey S.J."/>
            <person name="Marsh P."/>
            <person name="Skipp P."/>
            <person name="O'Connor C.D."/>
            <person name="Goodhead I."/>
            <person name="Norbertzcak H."/>
            <person name="Harris B."/>
            <person name="Ormond D."/>
            <person name="Rance R."/>
            <person name="Quail M.A."/>
            <person name="Parkhill J."/>
            <person name="Stephens R.S."/>
            <person name="Clarke I.N."/>
        </authorList>
    </citation>
    <scope>NUCLEOTIDE SEQUENCE [LARGE SCALE GENOMIC DNA]</scope>
    <source>
        <strain>UCH-1/proctitis</strain>
    </source>
</reference>
<protein>
    <recommendedName>
        <fullName evidence="1">Isoleucine--tRNA ligase</fullName>
        <ecNumber evidence="1">6.1.1.5</ecNumber>
    </recommendedName>
    <alternativeName>
        <fullName evidence="1">Isoleucyl-tRNA synthetase</fullName>
        <shortName evidence="1">IleRS</shortName>
    </alternativeName>
</protein>
<accession>B0BB05</accession>
<proteinExistence type="inferred from homology"/>
<evidence type="ECO:0000255" key="1">
    <source>
        <dbReference type="HAMAP-Rule" id="MF_02003"/>
    </source>
</evidence>
<organism>
    <name type="scientific">Chlamydia trachomatis serovar L2b (strain UCH-1/proctitis)</name>
    <dbReference type="NCBI Taxonomy" id="471473"/>
    <lineage>
        <taxon>Bacteria</taxon>
        <taxon>Pseudomonadati</taxon>
        <taxon>Chlamydiota</taxon>
        <taxon>Chlamydiia</taxon>
        <taxon>Chlamydiales</taxon>
        <taxon>Chlamydiaceae</taxon>
        <taxon>Chlamydia/Chlamydophila group</taxon>
        <taxon>Chlamydia</taxon>
    </lineage>
</organism>
<keyword id="KW-0030">Aminoacyl-tRNA synthetase</keyword>
<keyword id="KW-0067">ATP-binding</keyword>
<keyword id="KW-0963">Cytoplasm</keyword>
<keyword id="KW-0436">Ligase</keyword>
<keyword id="KW-0479">Metal-binding</keyword>
<keyword id="KW-0547">Nucleotide-binding</keyword>
<keyword id="KW-0648">Protein biosynthesis</keyword>
<keyword id="KW-0862">Zinc</keyword>
<feature type="chain" id="PRO_1000216255" description="Isoleucine--tRNA ligase">
    <location>
        <begin position="1"/>
        <end position="1036"/>
    </location>
</feature>
<feature type="short sequence motif" description="'HIGH' region">
    <location>
        <begin position="46"/>
        <end position="56"/>
    </location>
</feature>
<feature type="short sequence motif" description="'KMSKS' region">
    <location>
        <begin position="589"/>
        <end position="593"/>
    </location>
</feature>
<feature type="binding site" evidence="1">
    <location>
        <position position="592"/>
    </location>
    <ligand>
        <name>ATP</name>
        <dbReference type="ChEBI" id="CHEBI:30616"/>
    </ligand>
</feature>
<gene>
    <name evidence="1" type="primary">ileS</name>
    <name type="ordered locus">CTLon_0269</name>
</gene>